<organism>
    <name type="scientific">Pseudomonas syringae pv. syringae</name>
    <dbReference type="NCBI Taxonomy" id="321"/>
    <lineage>
        <taxon>Bacteria</taxon>
        <taxon>Pseudomonadati</taxon>
        <taxon>Pseudomonadota</taxon>
        <taxon>Gammaproteobacteria</taxon>
        <taxon>Pseudomonadales</taxon>
        <taxon>Pseudomonadaceae</taxon>
        <taxon>Pseudomonas</taxon>
        <taxon>Pseudomonas syringae</taxon>
    </lineage>
</organism>
<accession>P35674</accession>
<accession>O31180</accession>
<comment type="function">
    <text evidence="1 3 5">Harpins are proteins able to elicit hypersensitive response (HR) in non-host plants and are required for pathogenicity in host plants. HrpZ forms ion-conducting pores permeable for cations. Such pore-forming activity may allow nutrient release and/or delivery of virulence factors during bacterial colonization of host plants (By similarity).</text>
</comment>
<comment type="subunit">
    <text evidence="6">Homomultimeric.</text>
</comment>
<comment type="subcellular location">
    <subcellularLocation>
        <location evidence="1">Secreted</location>
    </subcellularLocation>
    <subcellularLocation>
        <location evidence="1">Host cell membrane</location>
    </subcellularLocation>
    <text evidence="1">Secreted via type III secretion system (T3SS), delivered into the host intercellular space. HrpZ travels through the hrp pilus and it is secreted only from the pilus tip (By similarity).</text>
</comment>
<comment type="induction">
    <text evidence="4">Regulated by HrpRS and HrpL.</text>
</comment>
<comment type="domain">
    <text>The glycine-rich region is characteristic of harpins.</text>
</comment>
<comment type="similarity">
    <text evidence="7">Belongs to the harpin HrpZ family.</text>
</comment>
<reference key="1">
    <citation type="journal article" date="1993" name="Cell">
        <title>Pseudomonas syringae pv. syringae harpinPss: a protein that is secreted via the Hrp pathway and elicits the hypersensitive response in plants.</title>
        <authorList>
            <person name="He S.Y."/>
            <person name="Huang H.-C."/>
            <person name="Collmer A."/>
        </authorList>
    </citation>
    <scope>NUCLEOTIDE SEQUENCE [GENOMIC DNA]</scope>
    <scope>PROTEIN SEQUENCE OF 1-7</scope>
    <scope>FUNCTION IN HR</scope>
    <source>
        <strain>Pss61</strain>
    </source>
</reference>
<reference key="2">
    <citation type="submission" date="1997-10" db="EMBL/GenBank/DDBJ databases">
        <title>Amplification, sequence and expression of the hrpZ gene of the bacterial canker pathogen, Pseudomonas syringae pv. syringae strain NV.</title>
        <authorList>
            <person name="Appel M."/>
            <person name="Hampf M."/>
            <person name="Mansvelt E.L."/>
            <person name="Hapgood J.P."/>
            <person name="Bellstedt D.U."/>
        </authorList>
    </citation>
    <scope>NUCLEOTIDE SEQUENCE [GENOMIC DNA]</scope>
    <source>
        <strain>NV</strain>
    </source>
</reference>
<reference key="3">
    <citation type="journal article" date="1994" name="J. Bacteriol.">
        <title>Identification of a putative alternate sigma factor and characterization of a multicomponent regulatory cascade controlling the expression of Pseudomonas syringae pv. syringae Pss61 hrp and hrmA genes.</title>
        <authorList>
            <person name="Xiao Y."/>
            <person name="Heu S."/>
            <person name="Yi J."/>
            <person name="Lu Y."/>
            <person name="Hutcheson S.W."/>
        </authorList>
    </citation>
    <scope>TRANSCRIPTIONAL REGULATION</scope>
    <source>
        <strain>Pss61</strain>
    </source>
</reference>
<reference key="4">
    <citation type="journal article" date="1995" name="Mol. Plant Microbe Interact.">
        <title>The HrpZ proteins of Pseudomonas syringae pvs. syringae, glycinea, and tomato are encoded by an operon containing Yersinia ysc homologs and elicit the hypersensitive response in tomato but not soybean.</title>
        <authorList>
            <person name="Preston G."/>
            <person name="Huang H.-C."/>
            <person name="He S.Y."/>
            <person name="Collmer A."/>
        </authorList>
    </citation>
    <scope>FUNCTION IN HR</scope>
    <source>
        <strain>Pss61</strain>
    </source>
</reference>
<reference key="5">
    <citation type="journal article" date="1995" name="Mol. Plant Microbe Interact.">
        <title>The complete hrp gene cluster of Pseudomonas syringae pv. syringae 61 includes two blocks of genes required for harpinPss secretion that are arranged colinearly with Yersinia ysc homologs.</title>
        <authorList>
            <person name="Huang H.-C."/>
            <person name="Lin R.-H."/>
            <person name="Chang C.-J."/>
            <person name="Collmer A."/>
            <person name="Deng W.-L."/>
        </authorList>
    </citation>
    <scope>SUBCELLULAR LOCATION</scope>
    <source>
        <strain>Pss61</strain>
    </source>
</reference>
<reference key="6">
    <citation type="journal article" date="1996" name="Mol. Plant Microbe Interact.">
        <title>The interaction of harpinPss, with plant cell walls.</title>
        <authorList>
            <person name="Hoyos M.E."/>
            <person name="Stanley C.M."/>
            <person name="He S.Y."/>
            <person name="Pike S."/>
            <person name="Pu X.-A."/>
            <person name="Novacky A."/>
        </authorList>
    </citation>
    <scope>SUBCELLULAR LOCATION</scope>
    <source>
        <strain>Pss61</strain>
    </source>
</reference>
<reference key="7">
    <citation type="journal article" date="1998" name="Physiol. Mol. Plant Pathol.">
        <title>An amphipathic protein from sweet pepper can dissociate harpinPss multimeric forms and intensify the harpinPss-mediated hypersensitive response.</title>
        <authorList>
            <person name="Chen C.-H."/>
            <person name="Lin H.-J."/>
            <person name="Feng T.-Y."/>
        </authorList>
        <dbReference type="AGRICOLA" id="IND21807826"/>
    </citation>
    <scope>SUBUNIT</scope>
    <source>
        <strain>Pss61</strain>
    </source>
</reference>
<protein>
    <recommendedName>
        <fullName>Harpin HrpZ</fullName>
    </recommendedName>
    <alternativeName>
        <fullName>Harpin-Pss</fullName>
    </alternativeName>
    <alternativeName>
        <fullName>HrpZ-Pss protein</fullName>
    </alternativeName>
</protein>
<sequence>MQSLSLNSSSLQTPAMALVLVRPEAETTGSTSSKALQEVVVKLAEELMRNGQLDDSSPLGKLLAKSMAADGKAGGGIEDVIAALDKLIHEKLGDNFGASADSASGTGQQDLMTQVLNGLAKSMLDDLLTKQDGGTSFSEDDMPMLNKIAQFMDDNPAQFPKPDSGSWVNELKEDNFLDGDETAAFRSALDIIGQQLGNQQSDAGSLAGTGGGLGTPSSFSNNSSVMGDPLIDANTGPGDSGNTRGEAGQLIGELIDRGLQSVLAGGGLGTPVNTPQTGTSANGGQSAQDLDQLLGGLLLKGLEATLKDAGQTGTDVQSSAAQIATLLVSTLLQGTRNQAAA</sequence>
<evidence type="ECO:0000250" key="1"/>
<evidence type="ECO:0000256" key="2">
    <source>
        <dbReference type="SAM" id="MobiDB-lite"/>
    </source>
</evidence>
<evidence type="ECO:0000269" key="3">
    <source>
    </source>
</evidence>
<evidence type="ECO:0000269" key="4">
    <source>
    </source>
</evidence>
<evidence type="ECO:0000269" key="5">
    <source>
    </source>
</evidence>
<evidence type="ECO:0000269" key="6">
    <source ref="7"/>
</evidence>
<evidence type="ECO:0000305" key="7"/>
<keyword id="KW-0903">Direct protein sequencing</keyword>
<keyword id="KW-1032">Host cell membrane</keyword>
<keyword id="KW-1043">Host membrane</keyword>
<keyword id="KW-0928">Hypersensitive response elicitation</keyword>
<keyword id="KW-0407">Ion channel</keyword>
<keyword id="KW-0406">Ion transport</keyword>
<keyword id="KW-0472">Membrane</keyword>
<keyword id="KW-0677">Repeat</keyword>
<keyword id="KW-0964">Secreted</keyword>
<keyword id="KW-0813">Transport</keyword>
<keyword id="KW-0843">Virulence</keyword>
<gene>
    <name type="primary">hrpZ</name>
</gene>
<feature type="chain" id="PRO_0000220302" description="Harpin HrpZ">
    <location>
        <begin position="1"/>
        <end position="341"/>
    </location>
</feature>
<feature type="repeat" description="1-1">
    <location>
        <begin position="210"/>
        <end position="216"/>
    </location>
</feature>
<feature type="repeat" description="1-2">
    <location>
        <begin position="265"/>
        <end position="271"/>
    </location>
</feature>
<feature type="repeat" description="2-1">
    <location>
        <begin position="276"/>
        <end position="279"/>
    </location>
</feature>
<feature type="repeat" description="2-2">
    <location>
        <begin position="311"/>
        <end position="314"/>
    </location>
</feature>
<feature type="region of interest" description="Disordered" evidence="2">
    <location>
        <begin position="199"/>
        <end position="228"/>
    </location>
</feature>
<feature type="region of interest" description="2 X 7 AA repeats of G-G-G-L-G-T-P">
    <location>
        <begin position="210"/>
        <end position="271"/>
    </location>
</feature>
<feature type="region of interest" description="2 X 4 AA repeats of Q-T-G-T">
    <location>
        <begin position="276"/>
        <end position="314"/>
    </location>
</feature>
<feature type="compositionally biased region" description="Polar residues" evidence="2">
    <location>
        <begin position="216"/>
        <end position="225"/>
    </location>
</feature>
<feature type="sequence variant" description="In strain: NV.">
    <original>A</original>
    <variation>T</variation>
    <location>
        <position position="25"/>
    </location>
</feature>
<feature type="sequence variant" description="In strain: NV.">
    <original>ST</original>
    <variation>ASS</variation>
    <location>
        <begin position="30"/>
        <end position="31"/>
    </location>
</feature>
<feature type="sequence variant" description="In strain: NV.">
    <original>S</original>
    <variation>N</variation>
    <location>
        <position position="102"/>
    </location>
</feature>
<feature type="sequence variant" description="In strain: NV.">
    <original>A</original>
    <variation>V</variation>
    <location>
        <position position="120"/>
    </location>
</feature>
<feature type="sequence variant" description="In strain: NV.">
    <original>D</original>
    <variation>G</variation>
    <location>
        <position position="202"/>
    </location>
</feature>
<feature type="sequence variant" description="In strain: NV.">
    <original>S</original>
    <variation>G</variation>
    <location>
        <position position="205"/>
    </location>
</feature>
<feature type="sequence variant" description="In strain: NV.">
    <original>N</original>
    <variation>S</variation>
    <location>
        <position position="221"/>
    </location>
</feature>
<feature type="sequence variant" description="In strain: NV.">
    <original>VM</original>
    <variation>GVK</variation>
    <location>
        <begin position="225"/>
        <end position="226"/>
    </location>
</feature>
<feature type="sequence variant" description="In strain: NV.">
    <original>NTR</original>
    <variation>TTS</variation>
    <location>
        <begin position="242"/>
        <end position="244"/>
    </location>
</feature>
<feature type="sequence variant" description="In strain: NV.">
    <original>S</original>
    <variation>A</variation>
    <location>
        <position position="280"/>
    </location>
</feature>
<feature type="sequence variant" description="In strain: NV.">
    <original>G</original>
    <variation>A</variation>
    <location>
        <position position="313"/>
    </location>
</feature>
<name>HRPZ_PSESY</name>
<proteinExistence type="evidence at protein level"/>
<dbReference type="EMBL" id="L14775">
    <property type="protein sequence ID" value="AAA25839.1"/>
    <property type="molecule type" value="Genomic_DNA"/>
</dbReference>
<dbReference type="EMBL" id="AF031667">
    <property type="protein sequence ID" value="AAB86735.1"/>
    <property type="molecule type" value="Genomic_DNA"/>
</dbReference>
<dbReference type="PIR" id="A40706">
    <property type="entry name" value="A40706"/>
</dbReference>
<dbReference type="RefSeq" id="WP_003433477.1">
    <property type="nucleotide sequence ID" value="NZ_MLEV01000001.1"/>
</dbReference>
<dbReference type="TCDB" id="1.C.56.1.1">
    <property type="family name" value="the pseudomonas syringae hrpz target host cell membrane cation channel (hrpz) family"/>
</dbReference>
<dbReference type="GO" id="GO:0005576">
    <property type="term" value="C:extracellular region"/>
    <property type="evidence" value="ECO:0007669"/>
    <property type="project" value="UniProtKB-SubCell"/>
</dbReference>
<dbReference type="GO" id="GO:0020002">
    <property type="term" value="C:host cell plasma membrane"/>
    <property type="evidence" value="ECO:0007669"/>
    <property type="project" value="UniProtKB-SubCell"/>
</dbReference>
<dbReference type="GO" id="GO:0016020">
    <property type="term" value="C:membrane"/>
    <property type="evidence" value="ECO:0007669"/>
    <property type="project" value="UniProtKB-KW"/>
</dbReference>
<dbReference type="GO" id="GO:0034220">
    <property type="term" value="P:monoatomic ion transmembrane transport"/>
    <property type="evidence" value="ECO:0007669"/>
    <property type="project" value="UniProtKB-KW"/>
</dbReference>
<dbReference type="GO" id="GO:0052040">
    <property type="term" value="P:symbiont-mediated perturbation of host programmed cell death"/>
    <property type="evidence" value="ECO:0007669"/>
    <property type="project" value="UniProtKB-KW"/>
</dbReference>
<dbReference type="InterPro" id="IPR006961">
    <property type="entry name" value="HrpN/Z"/>
</dbReference>
<dbReference type="InterPro" id="IPR054634">
    <property type="entry name" value="T3SS_HrpZ"/>
</dbReference>
<dbReference type="NCBIfam" id="NF045569">
    <property type="entry name" value="T3SSHrpZ"/>
    <property type="match status" value="1"/>
</dbReference>
<dbReference type="Pfam" id="PF04877">
    <property type="entry name" value="Harpin"/>
    <property type="match status" value="1"/>
</dbReference>